<accession>A0Q8N2</accession>
<reference key="1">
    <citation type="journal article" date="2007" name="Genome Biol.">
        <title>Comparison of Francisella tularensis genomes reveals evolutionary events associated with the emergence of human pathogenic strains.</title>
        <authorList>
            <person name="Rohmer L."/>
            <person name="Fong C."/>
            <person name="Abmayr S."/>
            <person name="Wasnick M."/>
            <person name="Larson Freeman T.J."/>
            <person name="Radey M."/>
            <person name="Guina T."/>
            <person name="Svensson K."/>
            <person name="Hayden H.S."/>
            <person name="Jacobs M."/>
            <person name="Gallagher L.A."/>
            <person name="Manoil C."/>
            <person name="Ernst R.K."/>
            <person name="Drees B."/>
            <person name="Buckley D."/>
            <person name="Haugen E."/>
            <person name="Bovee D."/>
            <person name="Zhou Y."/>
            <person name="Chang J."/>
            <person name="Levy R."/>
            <person name="Lim R."/>
            <person name="Gillett W."/>
            <person name="Guenthener D."/>
            <person name="Kang A."/>
            <person name="Shaffer S.A."/>
            <person name="Taylor G."/>
            <person name="Chen J."/>
            <person name="Gallis B."/>
            <person name="D'Argenio D.A."/>
            <person name="Forsman M."/>
            <person name="Olson M.V."/>
            <person name="Goodlett D.R."/>
            <person name="Kaul R."/>
            <person name="Miller S.I."/>
            <person name="Brittnacher M.J."/>
        </authorList>
    </citation>
    <scope>NUCLEOTIDE SEQUENCE [LARGE SCALE GENOMIC DNA]</scope>
    <source>
        <strain>U112</strain>
    </source>
</reference>
<dbReference type="EC" id="6.3.1.21" evidence="1"/>
<dbReference type="EMBL" id="CP000439">
    <property type="protein sequence ID" value="ABK90597.1"/>
    <property type="molecule type" value="Genomic_DNA"/>
</dbReference>
<dbReference type="RefSeq" id="WP_003040737.1">
    <property type="nucleotide sequence ID" value="NC_008601.1"/>
</dbReference>
<dbReference type="SMR" id="A0Q8N2"/>
<dbReference type="KEGG" id="ftn:FTN_1745"/>
<dbReference type="KEGG" id="ftx:AW25_241"/>
<dbReference type="BioCyc" id="FTUL401614:G1G75-1808-MONOMER"/>
<dbReference type="UniPathway" id="UPA00074">
    <property type="reaction ID" value="UER00127"/>
</dbReference>
<dbReference type="Proteomes" id="UP000000762">
    <property type="component" value="Chromosome"/>
</dbReference>
<dbReference type="GO" id="GO:0005829">
    <property type="term" value="C:cytosol"/>
    <property type="evidence" value="ECO:0007669"/>
    <property type="project" value="TreeGrafter"/>
</dbReference>
<dbReference type="GO" id="GO:0005524">
    <property type="term" value="F:ATP binding"/>
    <property type="evidence" value="ECO:0007669"/>
    <property type="project" value="UniProtKB-UniRule"/>
</dbReference>
<dbReference type="GO" id="GO:0000287">
    <property type="term" value="F:magnesium ion binding"/>
    <property type="evidence" value="ECO:0007669"/>
    <property type="project" value="InterPro"/>
</dbReference>
<dbReference type="GO" id="GO:0043815">
    <property type="term" value="F:phosphoribosylglycinamide formyltransferase 2 activity"/>
    <property type="evidence" value="ECO:0007669"/>
    <property type="project" value="UniProtKB-UniRule"/>
</dbReference>
<dbReference type="GO" id="GO:0004644">
    <property type="term" value="F:phosphoribosylglycinamide formyltransferase activity"/>
    <property type="evidence" value="ECO:0007669"/>
    <property type="project" value="InterPro"/>
</dbReference>
<dbReference type="GO" id="GO:0006189">
    <property type="term" value="P:'de novo' IMP biosynthetic process"/>
    <property type="evidence" value="ECO:0007669"/>
    <property type="project" value="UniProtKB-UniRule"/>
</dbReference>
<dbReference type="Gene3D" id="3.40.50.20">
    <property type="match status" value="1"/>
</dbReference>
<dbReference type="Gene3D" id="3.30.1490.20">
    <property type="entry name" value="ATP-grasp fold, A domain"/>
    <property type="match status" value="1"/>
</dbReference>
<dbReference type="Gene3D" id="3.30.470.20">
    <property type="entry name" value="ATP-grasp fold, B domain"/>
    <property type="match status" value="1"/>
</dbReference>
<dbReference type="HAMAP" id="MF_01643">
    <property type="entry name" value="PurT"/>
    <property type="match status" value="1"/>
</dbReference>
<dbReference type="InterPro" id="IPR011761">
    <property type="entry name" value="ATP-grasp"/>
</dbReference>
<dbReference type="InterPro" id="IPR003135">
    <property type="entry name" value="ATP-grasp_carboxylate-amine"/>
</dbReference>
<dbReference type="InterPro" id="IPR013815">
    <property type="entry name" value="ATP_grasp_subdomain_1"/>
</dbReference>
<dbReference type="InterPro" id="IPR016185">
    <property type="entry name" value="PreATP-grasp_dom_sf"/>
</dbReference>
<dbReference type="InterPro" id="IPR005862">
    <property type="entry name" value="PurT"/>
</dbReference>
<dbReference type="InterPro" id="IPR054350">
    <property type="entry name" value="PurT/PurK_preATP-grasp"/>
</dbReference>
<dbReference type="InterPro" id="IPR048740">
    <property type="entry name" value="PurT_C"/>
</dbReference>
<dbReference type="InterPro" id="IPR011054">
    <property type="entry name" value="Rudment_hybrid_motif"/>
</dbReference>
<dbReference type="NCBIfam" id="NF006766">
    <property type="entry name" value="PRK09288.1"/>
    <property type="match status" value="1"/>
</dbReference>
<dbReference type="NCBIfam" id="TIGR01142">
    <property type="entry name" value="purT"/>
    <property type="match status" value="1"/>
</dbReference>
<dbReference type="PANTHER" id="PTHR43055">
    <property type="entry name" value="FORMATE-DEPENDENT PHOSPHORIBOSYLGLYCINAMIDE FORMYLTRANSFERASE"/>
    <property type="match status" value="1"/>
</dbReference>
<dbReference type="PANTHER" id="PTHR43055:SF1">
    <property type="entry name" value="FORMATE-DEPENDENT PHOSPHORIBOSYLGLYCINAMIDE FORMYLTRANSFERASE"/>
    <property type="match status" value="1"/>
</dbReference>
<dbReference type="Pfam" id="PF02222">
    <property type="entry name" value="ATP-grasp"/>
    <property type="match status" value="1"/>
</dbReference>
<dbReference type="Pfam" id="PF21244">
    <property type="entry name" value="PurT_C"/>
    <property type="match status" value="1"/>
</dbReference>
<dbReference type="Pfam" id="PF22660">
    <property type="entry name" value="RS_preATP-grasp-like"/>
    <property type="match status" value="1"/>
</dbReference>
<dbReference type="SUPFAM" id="SSF56059">
    <property type="entry name" value="Glutathione synthetase ATP-binding domain-like"/>
    <property type="match status" value="1"/>
</dbReference>
<dbReference type="SUPFAM" id="SSF52440">
    <property type="entry name" value="PreATP-grasp domain"/>
    <property type="match status" value="1"/>
</dbReference>
<dbReference type="SUPFAM" id="SSF51246">
    <property type="entry name" value="Rudiment single hybrid motif"/>
    <property type="match status" value="1"/>
</dbReference>
<dbReference type="PROSITE" id="PS50975">
    <property type="entry name" value="ATP_GRASP"/>
    <property type="match status" value="1"/>
</dbReference>
<organism>
    <name type="scientific">Francisella tularensis subsp. novicida (strain U112)</name>
    <dbReference type="NCBI Taxonomy" id="401614"/>
    <lineage>
        <taxon>Bacteria</taxon>
        <taxon>Pseudomonadati</taxon>
        <taxon>Pseudomonadota</taxon>
        <taxon>Gammaproteobacteria</taxon>
        <taxon>Thiotrichales</taxon>
        <taxon>Francisellaceae</taxon>
        <taxon>Francisella</taxon>
    </lineage>
</organism>
<feature type="chain" id="PRO_0000319170" description="Formate-dependent phosphoribosylglycinamide formyltransferase">
    <location>
        <begin position="1"/>
        <end position="386"/>
    </location>
</feature>
<feature type="domain" description="ATP-grasp" evidence="1">
    <location>
        <begin position="112"/>
        <end position="301"/>
    </location>
</feature>
<feature type="binding site" evidence="1">
    <location>
        <begin position="15"/>
        <end position="16"/>
    </location>
    <ligand>
        <name>N(1)-(5-phospho-beta-D-ribosyl)glycinamide</name>
        <dbReference type="ChEBI" id="CHEBI:143788"/>
    </ligand>
</feature>
<feature type="binding site" evidence="1">
    <location>
        <position position="75"/>
    </location>
    <ligand>
        <name>N(1)-(5-phospho-beta-D-ribosyl)glycinamide</name>
        <dbReference type="ChEBI" id="CHEBI:143788"/>
    </ligand>
</feature>
<feature type="binding site" evidence="1">
    <location>
        <position position="107"/>
    </location>
    <ligand>
        <name>ATP</name>
        <dbReference type="ChEBI" id="CHEBI:30616"/>
    </ligand>
</feature>
<feature type="binding site" evidence="1">
    <location>
        <position position="148"/>
    </location>
    <ligand>
        <name>ATP</name>
        <dbReference type="ChEBI" id="CHEBI:30616"/>
    </ligand>
</feature>
<feature type="binding site" evidence="1">
    <location>
        <begin position="153"/>
        <end position="158"/>
    </location>
    <ligand>
        <name>ATP</name>
        <dbReference type="ChEBI" id="CHEBI:30616"/>
    </ligand>
</feature>
<feature type="binding site" evidence="1">
    <location>
        <begin position="188"/>
        <end position="191"/>
    </location>
    <ligand>
        <name>ATP</name>
        <dbReference type="ChEBI" id="CHEBI:30616"/>
    </ligand>
</feature>
<feature type="binding site" evidence="1">
    <location>
        <position position="196"/>
    </location>
    <ligand>
        <name>ATP</name>
        <dbReference type="ChEBI" id="CHEBI:30616"/>
    </ligand>
</feature>
<feature type="binding site" evidence="1">
    <location>
        <position position="260"/>
    </location>
    <ligand>
        <name>Mg(2+)</name>
        <dbReference type="ChEBI" id="CHEBI:18420"/>
    </ligand>
</feature>
<feature type="binding site" evidence="1">
    <location>
        <position position="272"/>
    </location>
    <ligand>
        <name>Mg(2+)</name>
        <dbReference type="ChEBI" id="CHEBI:18420"/>
    </ligand>
</feature>
<feature type="binding site" evidence="1">
    <location>
        <position position="279"/>
    </location>
    <ligand>
        <name>N(1)-(5-phospho-beta-D-ribosyl)glycinamide</name>
        <dbReference type="ChEBI" id="CHEBI:143788"/>
    </ligand>
</feature>
<feature type="binding site" evidence="1">
    <location>
        <position position="349"/>
    </location>
    <ligand>
        <name>N(1)-(5-phospho-beta-D-ribosyl)glycinamide</name>
        <dbReference type="ChEBI" id="CHEBI:143788"/>
    </ligand>
</feature>
<feature type="binding site" evidence="1">
    <location>
        <begin position="356"/>
        <end position="357"/>
    </location>
    <ligand>
        <name>N(1)-(5-phospho-beta-D-ribosyl)glycinamide</name>
        <dbReference type="ChEBI" id="CHEBI:143788"/>
    </ligand>
</feature>
<gene>
    <name evidence="1" type="primary">purT</name>
    <name type="ordered locus">FTN_1745</name>
</gene>
<protein>
    <recommendedName>
        <fullName evidence="1">Formate-dependent phosphoribosylglycinamide formyltransferase</fullName>
        <ecNumber evidence="1">6.3.1.21</ecNumber>
    </recommendedName>
    <alternativeName>
        <fullName evidence="1">5'-phosphoribosylglycinamide transformylase 2</fullName>
    </alternativeName>
    <alternativeName>
        <fullName evidence="1">Formate-dependent GAR transformylase</fullName>
    </alternativeName>
    <alternativeName>
        <fullName evidence="1">GAR transformylase 2</fullName>
        <shortName evidence="1">GART 2</shortName>
    </alternativeName>
    <alternativeName>
        <fullName evidence="1">Non-folate glycinamide ribonucleotide transformylase</fullName>
    </alternativeName>
    <alternativeName>
        <fullName evidence="1">Phosphoribosylglycinamide formyltransferase 2</fullName>
    </alternativeName>
</protein>
<keyword id="KW-0067">ATP-binding</keyword>
<keyword id="KW-0436">Ligase</keyword>
<keyword id="KW-0460">Magnesium</keyword>
<keyword id="KW-0479">Metal-binding</keyword>
<keyword id="KW-0547">Nucleotide-binding</keyword>
<keyword id="KW-0658">Purine biosynthesis</keyword>
<sequence>MNISNIKIMLLGSGELGKEFIIAAQRLGIHTIAVDRYKNAPAMQVAHESYVIDMLNADALEQLILAKNPTYIVPEIEAINTDSLVKLEAHNFNIIPCAKATKLTMDRQGIRALAAQQLNLQTSKFAFANSEQEYLDVIQSIGLPFVIKPVMSSSGKGQSIVKEHNEIKKAWDYAQNGSRGHAKGVIVEQFIDFDYEITLLTVRHKDGTSFCDPIGHIQKDGDYRFSWQPHTMSDTALAKSQGIAKEITDALGGYGVFGVELFIKGDEVFFNEVSPRPHDTGMVTLISQNINEFELHLRAIVGLPIPDIQTLQPSASAAILLEGDTANASICGIDKALADANVDIRIFGKKEIHGKRRMGVVLTKAQNTHIALETSKQALAYIHLTK</sequence>
<comment type="function">
    <text evidence="1">Involved in the de novo purine biosynthesis. Catalyzes the transfer of formate to 5-phospho-ribosyl-glycinamide (GAR), producing 5-phospho-ribosyl-N-formylglycinamide (FGAR). Formate is provided by PurU via hydrolysis of 10-formyl-tetrahydrofolate.</text>
</comment>
<comment type="catalytic activity">
    <reaction evidence="1">
        <text>N(1)-(5-phospho-beta-D-ribosyl)glycinamide + formate + ATP = N(2)-formyl-N(1)-(5-phospho-beta-D-ribosyl)glycinamide + ADP + phosphate + H(+)</text>
        <dbReference type="Rhea" id="RHEA:24829"/>
        <dbReference type="ChEBI" id="CHEBI:15378"/>
        <dbReference type="ChEBI" id="CHEBI:15740"/>
        <dbReference type="ChEBI" id="CHEBI:30616"/>
        <dbReference type="ChEBI" id="CHEBI:43474"/>
        <dbReference type="ChEBI" id="CHEBI:143788"/>
        <dbReference type="ChEBI" id="CHEBI:147286"/>
        <dbReference type="ChEBI" id="CHEBI:456216"/>
        <dbReference type="EC" id="6.3.1.21"/>
    </reaction>
    <physiologicalReaction direction="left-to-right" evidence="1">
        <dbReference type="Rhea" id="RHEA:24830"/>
    </physiologicalReaction>
</comment>
<comment type="pathway">
    <text evidence="1">Purine metabolism; IMP biosynthesis via de novo pathway; N(2)-formyl-N(1)-(5-phospho-D-ribosyl)glycinamide from N(1)-(5-phospho-D-ribosyl)glycinamide (formate route): step 1/1.</text>
</comment>
<comment type="subunit">
    <text evidence="1">Homodimer.</text>
</comment>
<comment type="similarity">
    <text evidence="1">Belongs to the PurK/PurT family.</text>
</comment>
<evidence type="ECO:0000255" key="1">
    <source>
        <dbReference type="HAMAP-Rule" id="MF_01643"/>
    </source>
</evidence>
<name>PURT_FRATN</name>
<proteinExistence type="inferred from homology"/>